<name>WNT7B_XENLA</name>
<proteinExistence type="evidence at transcript level"/>
<evidence type="ECO:0000250" key="1">
    <source>
        <dbReference type="UniProtKB" id="P27467"/>
    </source>
</evidence>
<evidence type="ECO:0000250" key="2">
    <source>
        <dbReference type="UniProtKB" id="P28026"/>
    </source>
</evidence>
<evidence type="ECO:0000250" key="3">
    <source>
        <dbReference type="UniProtKB" id="P28047"/>
    </source>
</evidence>
<evidence type="ECO:0000250" key="4">
    <source>
        <dbReference type="UniProtKB" id="P56704"/>
    </source>
</evidence>
<evidence type="ECO:0000250" key="5">
    <source>
        <dbReference type="UniProtKB" id="P56706"/>
    </source>
</evidence>
<evidence type="ECO:0000255" key="6"/>
<evidence type="ECO:0000269" key="7">
    <source>
    </source>
</evidence>
<evidence type="ECO:0000305" key="8"/>
<protein>
    <recommendedName>
        <fullName>Protein Wnt-7b</fullName>
        <shortName>XWnt-7b</shortName>
    </recommendedName>
</protein>
<gene>
    <name type="primary">wnt7b</name>
</gene>
<feature type="chain" id="PRO_0000200654" description="Protein Wnt-7b">
    <location>
        <begin position="1" status="less than"/>
        <end position="135" status="greater than"/>
    </location>
</feature>
<feature type="region of interest" description="Disordered linker" evidence="5">
    <location>
        <begin position="41"/>
        <end position="69"/>
    </location>
</feature>
<feature type="lipid moiety-binding region" description="O-palmitoleoyl serine; by PORCN" evidence="4">
    <location>
        <position position="9"/>
    </location>
</feature>
<feature type="glycosylation site" description="N-linked (GlcNAc...) asparagine" evidence="6">
    <location>
        <position position="98"/>
    </location>
</feature>
<feature type="disulfide bond" evidence="2">
    <location>
        <begin position="3"/>
        <end position="17"/>
    </location>
</feature>
<feature type="disulfide bond" evidence="2">
    <location>
        <begin position="5"/>
        <end position="12"/>
    </location>
</feature>
<feature type="disulfide bond" evidence="2">
    <location>
        <begin position="81"/>
        <end position="112"/>
    </location>
</feature>
<feature type="disulfide bond" evidence="2">
    <location>
        <begin position="97"/>
        <end position="107"/>
    </location>
</feature>
<feature type="disulfide bond" evidence="2">
    <location>
        <begin position="134"/>
        <end position="135"/>
    </location>
</feature>
<feature type="non-terminal residue">
    <location>
        <position position="1"/>
    </location>
</feature>
<feature type="non-terminal residue">
    <location>
        <position position="135"/>
    </location>
</feature>
<reference key="1">
    <citation type="journal article" date="1992" name="Oncogene">
        <title>Cloning and developmental expression in Xenopus laevis of seven additional members of the Wnt family.</title>
        <authorList>
            <person name="Wolda S.L."/>
            <person name="Moon R.T."/>
        </authorList>
    </citation>
    <scope>NUCLEOTIDE SEQUENCE [MRNA]</scope>
    <scope>TISSUE SPECIFICITY</scope>
    <scope>DEVELOPMENTAL STAGE</scope>
</reference>
<sequence length="135" mass="15613">QECKCHGVSGSCTTKTCWNTLPKFREIGFVLKEKYNDAVHVEVVRANRLRQPTFLKIKKVRSYQKPMETDLVYIERSPNYCEEDSTTGSVGTQGRLCNRTSPHTDGCDLMCCGRGYNTHQYTKVWQCNCKFHWCC</sequence>
<organism>
    <name type="scientific">Xenopus laevis</name>
    <name type="common">African clawed frog</name>
    <dbReference type="NCBI Taxonomy" id="8355"/>
    <lineage>
        <taxon>Eukaryota</taxon>
        <taxon>Metazoa</taxon>
        <taxon>Chordata</taxon>
        <taxon>Craniata</taxon>
        <taxon>Vertebrata</taxon>
        <taxon>Euteleostomi</taxon>
        <taxon>Amphibia</taxon>
        <taxon>Batrachia</taxon>
        <taxon>Anura</taxon>
        <taxon>Pipoidea</taxon>
        <taxon>Pipidae</taxon>
        <taxon>Xenopodinae</taxon>
        <taxon>Xenopus</taxon>
        <taxon>Xenopus</taxon>
    </lineage>
</organism>
<dbReference type="EMBL" id="L07534">
    <property type="protein sequence ID" value="AAA49987.1"/>
    <property type="molecule type" value="mRNA"/>
</dbReference>
<dbReference type="PIR" id="I51576">
    <property type="entry name" value="I51576"/>
</dbReference>
<dbReference type="SMR" id="P31289"/>
<dbReference type="GlyCosmos" id="P31289">
    <property type="glycosylation" value="1 site, No reported glycans"/>
</dbReference>
<dbReference type="AGR" id="Xenbase:XB-GENE-864808"/>
<dbReference type="Xenbase" id="XB-GENE-864808">
    <property type="gene designation" value="wnt7b.L"/>
</dbReference>
<dbReference type="Proteomes" id="UP000186698">
    <property type="component" value="Unplaced"/>
</dbReference>
<dbReference type="GO" id="GO:0005615">
    <property type="term" value="C:extracellular space"/>
    <property type="evidence" value="ECO:0000318"/>
    <property type="project" value="GO_Central"/>
</dbReference>
<dbReference type="GO" id="GO:0005125">
    <property type="term" value="F:cytokine activity"/>
    <property type="evidence" value="ECO:0000318"/>
    <property type="project" value="GO_Central"/>
</dbReference>
<dbReference type="GO" id="GO:0005109">
    <property type="term" value="F:frizzled binding"/>
    <property type="evidence" value="ECO:0000318"/>
    <property type="project" value="GO_Central"/>
</dbReference>
<dbReference type="GO" id="GO:0048513">
    <property type="term" value="P:animal organ development"/>
    <property type="evidence" value="ECO:0007669"/>
    <property type="project" value="UniProtKB-ARBA"/>
</dbReference>
<dbReference type="GO" id="GO:0060070">
    <property type="term" value="P:canonical Wnt signaling pathway"/>
    <property type="evidence" value="ECO:0000318"/>
    <property type="project" value="GO_Central"/>
</dbReference>
<dbReference type="GO" id="GO:0045165">
    <property type="term" value="P:cell fate commitment"/>
    <property type="evidence" value="ECO:0000318"/>
    <property type="project" value="GO_Central"/>
</dbReference>
<dbReference type="GO" id="GO:0030182">
    <property type="term" value="P:neuron differentiation"/>
    <property type="evidence" value="ECO:0000318"/>
    <property type="project" value="GO_Central"/>
</dbReference>
<dbReference type="GO" id="GO:0046330">
    <property type="term" value="P:positive regulation of JNK cascade"/>
    <property type="evidence" value="ECO:0000318"/>
    <property type="project" value="GO_Central"/>
</dbReference>
<dbReference type="GO" id="GO:0009888">
    <property type="term" value="P:tissue development"/>
    <property type="evidence" value="ECO:0007669"/>
    <property type="project" value="UniProtKB-ARBA"/>
</dbReference>
<dbReference type="FunFam" id="3.30.2460.20:FF:000001">
    <property type="entry name" value="Wnt homolog"/>
    <property type="match status" value="1"/>
</dbReference>
<dbReference type="Gene3D" id="3.30.2460.20">
    <property type="match status" value="1"/>
</dbReference>
<dbReference type="InterPro" id="IPR005817">
    <property type="entry name" value="Wnt"/>
</dbReference>
<dbReference type="InterPro" id="IPR013300">
    <property type="entry name" value="Wnt7"/>
</dbReference>
<dbReference type="InterPro" id="IPR043158">
    <property type="entry name" value="Wnt_C"/>
</dbReference>
<dbReference type="InterPro" id="IPR018161">
    <property type="entry name" value="Wnt_CS"/>
</dbReference>
<dbReference type="PANTHER" id="PTHR12027:SF73">
    <property type="entry name" value="PROTEIN WNT-7B"/>
    <property type="match status" value="1"/>
</dbReference>
<dbReference type="PANTHER" id="PTHR12027">
    <property type="entry name" value="WNT RELATED"/>
    <property type="match status" value="1"/>
</dbReference>
<dbReference type="Pfam" id="PF00110">
    <property type="entry name" value="wnt"/>
    <property type="match status" value="1"/>
</dbReference>
<dbReference type="PRINTS" id="PR01891">
    <property type="entry name" value="WNT7PROTEIN"/>
</dbReference>
<dbReference type="PRINTS" id="PR01349">
    <property type="entry name" value="WNTPROTEIN"/>
</dbReference>
<dbReference type="SMART" id="SM00097">
    <property type="entry name" value="WNT1"/>
    <property type="match status" value="1"/>
</dbReference>
<dbReference type="PROSITE" id="PS00246">
    <property type="entry name" value="WNT1"/>
    <property type="match status" value="1"/>
</dbReference>
<comment type="function">
    <text evidence="3 5">Ligand for members of the frizzled family of seven transmembrane receptors that functions in the canonical Wnt/beta-catenin signaling pathway (By similarity). Required for normal fusion of the chorion and the allantois during placenta development (By similarity). Required for central nervous system (CNS) angiogenesis and blood-brain barrier regulation (By similarity).</text>
</comment>
<comment type="subcellular location">
    <subcellularLocation>
        <location evidence="5">Secreted</location>
        <location evidence="5">Extracellular space</location>
        <location evidence="5">Extracellular matrix</location>
    </subcellularLocation>
    <subcellularLocation>
        <location evidence="5">Secreted</location>
    </subcellularLocation>
</comment>
<comment type="tissue specificity">
    <text evidence="7">In adults, in brain and lung.</text>
</comment>
<comment type="developmental stage">
    <text evidence="7">Tailbud onwards.</text>
</comment>
<comment type="PTM">
    <text evidence="1 4">Palmitoleoylation is required for efficient binding to frizzled receptors. Depalmitoleoylation leads to Wnt signaling pathway inhibition.</text>
</comment>
<comment type="similarity">
    <text evidence="8">Belongs to the Wnt family.</text>
</comment>
<keyword id="KW-0217">Developmental protein</keyword>
<keyword id="KW-1015">Disulfide bond</keyword>
<keyword id="KW-0272">Extracellular matrix</keyword>
<keyword id="KW-0325">Glycoprotein</keyword>
<keyword id="KW-0449">Lipoprotein</keyword>
<keyword id="KW-1185">Reference proteome</keyword>
<keyword id="KW-0964">Secreted</keyword>
<keyword id="KW-0879">Wnt signaling pathway</keyword>
<accession>P31289</accession>